<accession>Q68VS6</accession>
<feature type="chain" id="PRO_0000280968" description="DNA translocase FtsK">
    <location>
        <begin position="1"/>
        <end position="740"/>
    </location>
</feature>
<feature type="transmembrane region" description="Helical" evidence="2">
    <location>
        <begin position="16"/>
        <end position="36"/>
    </location>
</feature>
<feature type="transmembrane region" description="Helical" evidence="2">
    <location>
        <begin position="63"/>
        <end position="83"/>
    </location>
</feature>
<feature type="transmembrane region" description="Helical" evidence="2">
    <location>
        <begin position="93"/>
        <end position="113"/>
    </location>
</feature>
<feature type="transmembrane region" description="Helical" evidence="2">
    <location>
        <begin position="115"/>
        <end position="135"/>
    </location>
</feature>
<feature type="transmembrane region" description="Helical" evidence="2">
    <location>
        <begin position="144"/>
        <end position="164"/>
    </location>
</feature>
<feature type="transmembrane region" description="Helical" evidence="2">
    <location>
        <begin position="167"/>
        <end position="187"/>
    </location>
</feature>
<feature type="topological domain" description="Cytoplasmic" evidence="2">
    <location>
        <begin position="188"/>
        <end position="740"/>
    </location>
</feature>
<feature type="domain" description="FtsK" evidence="3">
    <location>
        <begin position="382"/>
        <end position="601"/>
    </location>
</feature>
<feature type="binding site" evidence="3">
    <location>
        <begin position="402"/>
        <end position="407"/>
    </location>
    <ligand>
        <name>ATP</name>
        <dbReference type="ChEBI" id="CHEBI:30616"/>
    </ligand>
</feature>
<organism>
    <name type="scientific">Rickettsia typhi (strain ATCC VR-144 / Wilmington)</name>
    <dbReference type="NCBI Taxonomy" id="257363"/>
    <lineage>
        <taxon>Bacteria</taxon>
        <taxon>Pseudomonadati</taxon>
        <taxon>Pseudomonadota</taxon>
        <taxon>Alphaproteobacteria</taxon>
        <taxon>Rickettsiales</taxon>
        <taxon>Rickettsiaceae</taxon>
        <taxon>Rickettsieae</taxon>
        <taxon>Rickettsia</taxon>
        <taxon>typhus group</taxon>
    </lineage>
</organism>
<proteinExistence type="inferred from homology"/>
<sequence length="740" mass="82552">MILYYINKILSNNKVQAFILWIIGLAIVIVLISYNIDDPSFNSVTTEYPSNLIGIAGAYLSDFLYQFFGLTAFIIPLACFVWGRNCWHERYRSVFIRIFVVLLALISSSTLLSKIKLEFIPASAGGAVGIIVSNFCERFINQLYLLFQTFVILVVLLEIKLISISNVLIKLSKFLTNLILSFFNYIFPRLSLITIQNNDKLNITSFYQKPASKKVTFTEEASLIPTNPIKCFIKPVCTKISQNKIAALPPISLLCDPKNNHVKGASSSELKQKAEELLTVLNDFGVKGHIININQGPVVTQYEFEPAAGTKTSRVVGLSDDIARSLSALSTRIAVIPGKNVLGIELPNKQREFFCLKELIETPEYQDKSILLPLVLGKDLAGKPLIADLARMPHLLVAGTTGSGKSVGINAMIVSLLYRYTPEECRFIMIDPKMLELSAYDGIPHLLTPVVTEPSKAVIALKWAVKEMENRYRMMSNIGVKNIAGYNEKILEAVKENRVIERPIQTGFDPETGKPIYETVTMNMAKLPYIVVIVDEMADLMLVSGKDIEMLIQRLAQMARAAGIHIIMATQRPSVDVITGVIKANFPSRISFKVTSKIDSRTILGEQGSEQLLGMGDMLFMGNTSKISRVHGPFVNEAEITKITEYLKETSMPVYISEVTEQPEENYSSIDIVDGSIDEVLYKKAVQIVRNERKASISYIQRSLRIGYNKAANLVEKMEKDGIVSPPNHTGKREILLPEM</sequence>
<keyword id="KW-0067">ATP-binding</keyword>
<keyword id="KW-0131">Cell cycle</keyword>
<keyword id="KW-0132">Cell division</keyword>
<keyword id="KW-0997">Cell inner membrane</keyword>
<keyword id="KW-1003">Cell membrane</keyword>
<keyword id="KW-0159">Chromosome partition</keyword>
<keyword id="KW-0238">DNA-binding</keyword>
<keyword id="KW-0472">Membrane</keyword>
<keyword id="KW-0547">Nucleotide-binding</keyword>
<keyword id="KW-0812">Transmembrane</keyword>
<keyword id="KW-1133">Transmembrane helix</keyword>
<dbReference type="EMBL" id="AE017197">
    <property type="protein sequence ID" value="AAU04266.1"/>
    <property type="molecule type" value="Genomic_DNA"/>
</dbReference>
<dbReference type="SMR" id="Q68VS6"/>
<dbReference type="KEGG" id="rty:RT0811"/>
<dbReference type="eggNOG" id="COG1674">
    <property type="taxonomic scope" value="Bacteria"/>
</dbReference>
<dbReference type="HOGENOM" id="CLU_001981_9_7_5"/>
<dbReference type="Proteomes" id="UP000000604">
    <property type="component" value="Chromosome"/>
</dbReference>
<dbReference type="GO" id="GO:0005886">
    <property type="term" value="C:plasma membrane"/>
    <property type="evidence" value="ECO:0007669"/>
    <property type="project" value="UniProtKB-SubCell"/>
</dbReference>
<dbReference type="GO" id="GO:0005524">
    <property type="term" value="F:ATP binding"/>
    <property type="evidence" value="ECO:0007669"/>
    <property type="project" value="UniProtKB-KW"/>
</dbReference>
<dbReference type="GO" id="GO:0016887">
    <property type="term" value="F:ATP hydrolysis activity"/>
    <property type="evidence" value="ECO:0007669"/>
    <property type="project" value="InterPro"/>
</dbReference>
<dbReference type="GO" id="GO:0003677">
    <property type="term" value="F:DNA binding"/>
    <property type="evidence" value="ECO:0007669"/>
    <property type="project" value="UniProtKB-KW"/>
</dbReference>
<dbReference type="GO" id="GO:0051301">
    <property type="term" value="P:cell division"/>
    <property type="evidence" value="ECO:0007669"/>
    <property type="project" value="UniProtKB-KW"/>
</dbReference>
<dbReference type="GO" id="GO:0007059">
    <property type="term" value="P:chromosome segregation"/>
    <property type="evidence" value="ECO:0007669"/>
    <property type="project" value="UniProtKB-KW"/>
</dbReference>
<dbReference type="Gene3D" id="3.30.980.40">
    <property type="match status" value="1"/>
</dbReference>
<dbReference type="Gene3D" id="3.40.50.300">
    <property type="entry name" value="P-loop containing nucleotide triphosphate hydrolases"/>
    <property type="match status" value="1"/>
</dbReference>
<dbReference type="Gene3D" id="1.10.10.10">
    <property type="entry name" value="Winged helix-like DNA-binding domain superfamily/Winged helix DNA-binding domain"/>
    <property type="match status" value="1"/>
</dbReference>
<dbReference type="InterPro" id="IPR003593">
    <property type="entry name" value="AAA+_ATPase"/>
</dbReference>
<dbReference type="InterPro" id="IPR050206">
    <property type="entry name" value="FtsK/SpoIIIE/SftA"/>
</dbReference>
<dbReference type="InterPro" id="IPR025199">
    <property type="entry name" value="FtsK_4TM"/>
</dbReference>
<dbReference type="InterPro" id="IPR041027">
    <property type="entry name" value="FtsK_alpha"/>
</dbReference>
<dbReference type="InterPro" id="IPR002543">
    <property type="entry name" value="FtsK_dom"/>
</dbReference>
<dbReference type="InterPro" id="IPR018541">
    <property type="entry name" value="Ftsk_gamma"/>
</dbReference>
<dbReference type="InterPro" id="IPR027417">
    <property type="entry name" value="P-loop_NTPase"/>
</dbReference>
<dbReference type="InterPro" id="IPR036388">
    <property type="entry name" value="WH-like_DNA-bd_sf"/>
</dbReference>
<dbReference type="InterPro" id="IPR036390">
    <property type="entry name" value="WH_DNA-bd_sf"/>
</dbReference>
<dbReference type="PANTHER" id="PTHR22683:SF41">
    <property type="entry name" value="DNA TRANSLOCASE FTSK"/>
    <property type="match status" value="1"/>
</dbReference>
<dbReference type="PANTHER" id="PTHR22683">
    <property type="entry name" value="SPORULATION PROTEIN RELATED"/>
    <property type="match status" value="1"/>
</dbReference>
<dbReference type="Pfam" id="PF13491">
    <property type="entry name" value="FtsK_4TM"/>
    <property type="match status" value="1"/>
</dbReference>
<dbReference type="Pfam" id="PF17854">
    <property type="entry name" value="FtsK_alpha"/>
    <property type="match status" value="1"/>
</dbReference>
<dbReference type="Pfam" id="PF09397">
    <property type="entry name" value="FtsK_gamma"/>
    <property type="match status" value="1"/>
</dbReference>
<dbReference type="Pfam" id="PF01580">
    <property type="entry name" value="FtsK_SpoIIIE"/>
    <property type="match status" value="1"/>
</dbReference>
<dbReference type="SMART" id="SM00382">
    <property type="entry name" value="AAA"/>
    <property type="match status" value="1"/>
</dbReference>
<dbReference type="SMART" id="SM00843">
    <property type="entry name" value="Ftsk_gamma"/>
    <property type="match status" value="1"/>
</dbReference>
<dbReference type="SUPFAM" id="SSF52540">
    <property type="entry name" value="P-loop containing nucleoside triphosphate hydrolases"/>
    <property type="match status" value="1"/>
</dbReference>
<dbReference type="SUPFAM" id="SSF46785">
    <property type="entry name" value="Winged helix' DNA-binding domain"/>
    <property type="match status" value="1"/>
</dbReference>
<dbReference type="PROSITE" id="PS50901">
    <property type="entry name" value="FTSK"/>
    <property type="match status" value="1"/>
</dbReference>
<protein>
    <recommendedName>
        <fullName>DNA translocase FtsK</fullName>
    </recommendedName>
</protein>
<name>FTSK_RICTY</name>
<reference key="1">
    <citation type="journal article" date="2004" name="J. Bacteriol.">
        <title>Complete genome sequence of Rickettsia typhi and comparison with sequences of other Rickettsiae.</title>
        <authorList>
            <person name="McLeod M.P."/>
            <person name="Qin X."/>
            <person name="Karpathy S.E."/>
            <person name="Gioia J."/>
            <person name="Highlander S.K."/>
            <person name="Fox G.E."/>
            <person name="McNeill T.Z."/>
            <person name="Jiang H."/>
            <person name="Muzny D."/>
            <person name="Jacob L.S."/>
            <person name="Hawes A.C."/>
            <person name="Sodergren E."/>
            <person name="Gill R."/>
            <person name="Hume J."/>
            <person name="Morgan M."/>
            <person name="Fan G."/>
            <person name="Amin A.G."/>
            <person name="Gibbs R.A."/>
            <person name="Hong C."/>
            <person name="Yu X.-J."/>
            <person name="Walker D.H."/>
            <person name="Weinstock G.M."/>
        </authorList>
    </citation>
    <scope>NUCLEOTIDE SEQUENCE [LARGE SCALE GENOMIC DNA]</scope>
    <source>
        <strain>ATCC VR-144 / Wilmington</strain>
    </source>
</reference>
<gene>
    <name type="primary">ftsK</name>
    <name type="ordered locus">RT0811</name>
</gene>
<evidence type="ECO:0000250" key="1"/>
<evidence type="ECO:0000255" key="2"/>
<evidence type="ECO:0000255" key="3">
    <source>
        <dbReference type="PROSITE-ProRule" id="PRU00289"/>
    </source>
</evidence>
<evidence type="ECO:0000305" key="4"/>
<comment type="function">
    <text evidence="1">Essential cell division protein that coordinates cell division and chromosome segregation. The N-terminus is involved in assembly of the cell-division machinery. The C-terminus functions as a DNA motor that moves dsDNA in an ATP-dependent manner towards the dif recombination site, which is located within the replication terminus region. Translocation stops specifically at Xer-dif sites, where FtsK interacts with the Xer recombinase, allowing activation of chromosome unlinking by recombination. FtsK orienting polar sequences (KOPS) guide the direction of DNA translocation. FtsK can remove proteins from DNA as it translocates, but translocation stops specifically at XerCD-dif site, thereby preventing removal of XerC and XerD from dif (By similarity).</text>
</comment>
<comment type="subunit">
    <text evidence="1">Homohexamer. Forms a ring that surrounds DNA (By similarity).</text>
</comment>
<comment type="subcellular location">
    <subcellularLocation>
        <location evidence="1">Cell inner membrane</location>
        <topology evidence="1">Multi-pass membrane protein</topology>
    </subcellularLocation>
    <text evidence="1">Located at the septum.</text>
</comment>
<comment type="domain">
    <text evidence="1">Consists of an N-terminal domain, which is sufficient for the localization to the septal ring and is required for cell division, followed by a linker domain, and a C-terminal domain, which forms the translocation motor involved in chromosome segregation. The C-terminal domain can be further subdivided into alpha, beta and gamma subdomains. The alpha and beta subdomains multimerise to produce a hexameric ring, contain the nucleotide binding motif and form the DNA pump. The gamma subdomain is a regulatory subdomain that controls translocation of DNA by recognition of KOPS motifs and interacts with XerD recombinase (By similarity).</text>
</comment>
<comment type="similarity">
    <text evidence="4">Belongs to the FtsK/SpoIIIE/SftA family.</text>
</comment>